<sequence length="161" mass="17508">MKYDTSELCDIYHEEVNVVEPLFSNFGGRTSFGGQITTVKCFEDNGLLFELLEENGRGRVLVIDGGGSVRRALINAELARLATQNEWEGIVVYGAVRQVDDLEEMDIGIQAMAAIPVGAASESIGESDIRVNFGGVTFFSGDHLYADNTGIILSEDPLDIE</sequence>
<comment type="function">
    <text evidence="1">Globally modulates RNA abundance by binding to RNase E (Rne) and regulating its endonucleolytic activity. Can modulate Rne action in a substrate-dependent manner by altering the composition of the degradosome. Modulates RNA-binding and helicase activities of the degradosome.</text>
</comment>
<comment type="subunit">
    <text evidence="1">Homotrimer. Binds to both RNA-binding sites in the C-terminal region of Rne and to RhlB.</text>
</comment>
<comment type="subcellular location">
    <subcellularLocation>
        <location evidence="1">Cytoplasm</location>
    </subcellularLocation>
</comment>
<comment type="similarity">
    <text evidence="1">Belongs to the RraA family.</text>
</comment>
<accession>A8GL98</accession>
<reference key="1">
    <citation type="submission" date="2007-09" db="EMBL/GenBank/DDBJ databases">
        <title>Complete sequence of chromosome of Serratia proteamaculans 568.</title>
        <authorList>
            <consortium name="US DOE Joint Genome Institute"/>
            <person name="Copeland A."/>
            <person name="Lucas S."/>
            <person name="Lapidus A."/>
            <person name="Barry K."/>
            <person name="Glavina del Rio T."/>
            <person name="Dalin E."/>
            <person name="Tice H."/>
            <person name="Pitluck S."/>
            <person name="Chain P."/>
            <person name="Malfatti S."/>
            <person name="Shin M."/>
            <person name="Vergez L."/>
            <person name="Schmutz J."/>
            <person name="Larimer F."/>
            <person name="Land M."/>
            <person name="Hauser L."/>
            <person name="Kyrpides N."/>
            <person name="Kim E."/>
            <person name="Taghavi S."/>
            <person name="Newman L."/>
            <person name="Vangronsveld J."/>
            <person name="van der Lelie D."/>
            <person name="Richardson P."/>
        </authorList>
    </citation>
    <scope>NUCLEOTIDE SEQUENCE [LARGE SCALE GENOMIC DNA]</scope>
    <source>
        <strain>568</strain>
    </source>
</reference>
<keyword id="KW-0963">Cytoplasm</keyword>
<organism>
    <name type="scientific">Serratia proteamaculans (strain 568)</name>
    <dbReference type="NCBI Taxonomy" id="399741"/>
    <lineage>
        <taxon>Bacteria</taxon>
        <taxon>Pseudomonadati</taxon>
        <taxon>Pseudomonadota</taxon>
        <taxon>Gammaproteobacteria</taxon>
        <taxon>Enterobacterales</taxon>
        <taxon>Yersiniaceae</taxon>
        <taxon>Serratia</taxon>
    </lineage>
</organism>
<protein>
    <recommendedName>
        <fullName evidence="1">Regulator of ribonuclease activity A</fullName>
    </recommendedName>
</protein>
<dbReference type="EMBL" id="CP000826">
    <property type="protein sequence ID" value="ABV43888.1"/>
    <property type="molecule type" value="Genomic_DNA"/>
</dbReference>
<dbReference type="SMR" id="A8GL98"/>
<dbReference type="STRING" id="399741.Spro_4795"/>
<dbReference type="KEGG" id="spe:Spro_4795"/>
<dbReference type="eggNOG" id="COG0684">
    <property type="taxonomic scope" value="Bacteria"/>
</dbReference>
<dbReference type="HOGENOM" id="CLU_072626_4_0_6"/>
<dbReference type="OrthoDB" id="943692at2"/>
<dbReference type="GO" id="GO:0005829">
    <property type="term" value="C:cytosol"/>
    <property type="evidence" value="ECO:0007669"/>
    <property type="project" value="TreeGrafter"/>
</dbReference>
<dbReference type="GO" id="GO:0060698">
    <property type="term" value="F:endoribonuclease inhibitor activity"/>
    <property type="evidence" value="ECO:0007669"/>
    <property type="project" value="UniProtKB-UniRule"/>
</dbReference>
<dbReference type="GO" id="GO:0019899">
    <property type="term" value="F:enzyme binding"/>
    <property type="evidence" value="ECO:0007669"/>
    <property type="project" value="UniProtKB-UniRule"/>
</dbReference>
<dbReference type="GO" id="GO:1902369">
    <property type="term" value="P:negative regulation of RNA catabolic process"/>
    <property type="evidence" value="ECO:0007669"/>
    <property type="project" value="TreeGrafter"/>
</dbReference>
<dbReference type="CDD" id="cd16841">
    <property type="entry name" value="RraA_family"/>
    <property type="match status" value="1"/>
</dbReference>
<dbReference type="FunFam" id="3.50.30.40:FF:000001">
    <property type="entry name" value="Regulator of ribonuclease activity A"/>
    <property type="match status" value="1"/>
</dbReference>
<dbReference type="Gene3D" id="3.50.30.40">
    <property type="entry name" value="Ribonuclease E inhibitor RraA/RraA-like"/>
    <property type="match status" value="1"/>
</dbReference>
<dbReference type="HAMAP" id="MF_00471">
    <property type="entry name" value="RraA"/>
    <property type="match status" value="1"/>
</dbReference>
<dbReference type="InterPro" id="IPR010203">
    <property type="entry name" value="RraA"/>
</dbReference>
<dbReference type="InterPro" id="IPR005493">
    <property type="entry name" value="RraA/RraA-like"/>
</dbReference>
<dbReference type="InterPro" id="IPR036704">
    <property type="entry name" value="RraA/RraA-like_sf"/>
</dbReference>
<dbReference type="InterPro" id="IPR014339">
    <property type="entry name" value="RraA_gpbac"/>
</dbReference>
<dbReference type="NCBIfam" id="TIGR01935">
    <property type="entry name" value="NOT-MenG"/>
    <property type="match status" value="1"/>
</dbReference>
<dbReference type="NCBIfam" id="NF006875">
    <property type="entry name" value="PRK09372.1"/>
    <property type="match status" value="1"/>
</dbReference>
<dbReference type="NCBIfam" id="TIGR02998">
    <property type="entry name" value="RraA_entero"/>
    <property type="match status" value="1"/>
</dbReference>
<dbReference type="PANTHER" id="PTHR33254">
    <property type="entry name" value="4-HYDROXY-4-METHYL-2-OXOGLUTARATE ALDOLASE 3-RELATED"/>
    <property type="match status" value="1"/>
</dbReference>
<dbReference type="PANTHER" id="PTHR33254:SF29">
    <property type="entry name" value="REGULATOR OF RIBONUCLEASE ACTIVITY A"/>
    <property type="match status" value="1"/>
</dbReference>
<dbReference type="Pfam" id="PF03737">
    <property type="entry name" value="RraA-like"/>
    <property type="match status" value="1"/>
</dbReference>
<dbReference type="SUPFAM" id="SSF89562">
    <property type="entry name" value="RraA-like"/>
    <property type="match status" value="1"/>
</dbReference>
<feature type="chain" id="PRO_1000060383" description="Regulator of ribonuclease activity A">
    <location>
        <begin position="1"/>
        <end position="161"/>
    </location>
</feature>
<gene>
    <name evidence="1" type="primary">rraA</name>
    <name type="ordered locus">Spro_4795</name>
</gene>
<proteinExistence type="inferred from homology"/>
<evidence type="ECO:0000255" key="1">
    <source>
        <dbReference type="HAMAP-Rule" id="MF_00471"/>
    </source>
</evidence>
<name>RRAA_SERP5</name>